<feature type="chain" id="PRO_1000063931" description="Methylenetetrahydrofolate--tRNA-(uracil-5-)-methyltransferase TrmFO">
    <location>
        <begin position="1"/>
        <end position="435"/>
    </location>
</feature>
<feature type="binding site" evidence="1">
    <location>
        <begin position="9"/>
        <end position="14"/>
    </location>
    <ligand>
        <name>FAD</name>
        <dbReference type="ChEBI" id="CHEBI:57692"/>
    </ligand>
</feature>
<protein>
    <recommendedName>
        <fullName evidence="1">Methylenetetrahydrofolate--tRNA-(uracil-5-)-methyltransferase TrmFO</fullName>
        <ecNumber evidence="1">2.1.1.74</ecNumber>
    </recommendedName>
    <alternativeName>
        <fullName evidence="1">Folate-dependent tRNA (uracil-5-)-methyltransferase</fullName>
    </alternativeName>
    <alternativeName>
        <fullName evidence="1">Folate-dependent tRNA(M-5-U54)-methyltransferase</fullName>
    </alternativeName>
</protein>
<accession>Q2FHI7</accession>
<reference key="1">
    <citation type="journal article" date="2006" name="Lancet">
        <title>Complete genome sequence of USA300, an epidemic clone of community-acquired meticillin-resistant Staphylococcus aureus.</title>
        <authorList>
            <person name="Diep B.A."/>
            <person name="Gill S.R."/>
            <person name="Chang R.F."/>
            <person name="Phan T.H."/>
            <person name="Chen J.H."/>
            <person name="Davidson M.G."/>
            <person name="Lin F."/>
            <person name="Lin J."/>
            <person name="Carleton H.A."/>
            <person name="Mongodin E.F."/>
            <person name="Sensabaugh G.F."/>
            <person name="Perdreau-Remington F."/>
        </authorList>
    </citation>
    <scope>NUCLEOTIDE SEQUENCE [LARGE SCALE GENOMIC DNA]</scope>
    <source>
        <strain>USA300</strain>
    </source>
</reference>
<name>TRMFO_STAA3</name>
<comment type="function">
    <text evidence="1">Catalyzes the folate-dependent formation of 5-methyl-uridine at position 54 (M-5-U54) in all tRNAs.</text>
</comment>
<comment type="catalytic activity">
    <reaction evidence="1">
        <text>uridine(54) in tRNA + (6R)-5,10-methylene-5,6,7,8-tetrahydrofolate + NADH + H(+) = 5-methyluridine(54) in tRNA + (6S)-5,6,7,8-tetrahydrofolate + NAD(+)</text>
        <dbReference type="Rhea" id="RHEA:16873"/>
        <dbReference type="Rhea" id="RHEA-COMP:10167"/>
        <dbReference type="Rhea" id="RHEA-COMP:10193"/>
        <dbReference type="ChEBI" id="CHEBI:15378"/>
        <dbReference type="ChEBI" id="CHEBI:15636"/>
        <dbReference type="ChEBI" id="CHEBI:57453"/>
        <dbReference type="ChEBI" id="CHEBI:57540"/>
        <dbReference type="ChEBI" id="CHEBI:57945"/>
        <dbReference type="ChEBI" id="CHEBI:65315"/>
        <dbReference type="ChEBI" id="CHEBI:74447"/>
        <dbReference type="EC" id="2.1.1.74"/>
    </reaction>
</comment>
<comment type="catalytic activity">
    <reaction evidence="1">
        <text>uridine(54) in tRNA + (6R)-5,10-methylene-5,6,7,8-tetrahydrofolate + NADPH + H(+) = 5-methyluridine(54) in tRNA + (6S)-5,6,7,8-tetrahydrofolate + NADP(+)</text>
        <dbReference type="Rhea" id="RHEA:62372"/>
        <dbReference type="Rhea" id="RHEA-COMP:10167"/>
        <dbReference type="Rhea" id="RHEA-COMP:10193"/>
        <dbReference type="ChEBI" id="CHEBI:15378"/>
        <dbReference type="ChEBI" id="CHEBI:15636"/>
        <dbReference type="ChEBI" id="CHEBI:57453"/>
        <dbReference type="ChEBI" id="CHEBI:57783"/>
        <dbReference type="ChEBI" id="CHEBI:58349"/>
        <dbReference type="ChEBI" id="CHEBI:65315"/>
        <dbReference type="ChEBI" id="CHEBI:74447"/>
        <dbReference type="EC" id="2.1.1.74"/>
    </reaction>
</comment>
<comment type="cofactor">
    <cofactor evidence="1">
        <name>FAD</name>
        <dbReference type="ChEBI" id="CHEBI:57692"/>
    </cofactor>
</comment>
<comment type="subcellular location">
    <subcellularLocation>
        <location evidence="1">Cytoplasm</location>
    </subcellularLocation>
</comment>
<comment type="similarity">
    <text evidence="1">Belongs to the MnmG family. TrmFO subfamily.</text>
</comment>
<evidence type="ECO:0000255" key="1">
    <source>
        <dbReference type="HAMAP-Rule" id="MF_01037"/>
    </source>
</evidence>
<sequence length="435" mass="48371">MTQTVNVIGAGLAGSEAAYQLAERGIKVNLIEMRPVKQTPAHHTDKFAELVCSNSLRGNALTNGVGVLKEEMRRLNSIIIEAADKARVPAGGALAVDRHDFSGYITETLKNHENITVINEEINAIPDGYTIIATGPLTTETLAQEIVDITGKDQLYFYDAAAPIIEKESIDMDKVYLKSRYDKGEAAYLNCPMTEDEFNRFYDAVLEAEVAPVNSFEKEKYFEGCMPFEVMAERGRKTLLFGPMKPVGLEDPKTGKRPYAVVQLRQDDAAGTLYNIVGFQTHLKWGAQKEVIKLIPGLENVDIVRYGVMHRNTFINSPDVLNEKYELISQPNIQFAGQMTGVEGYVESAASGLVAGINLAHKILGKGEVVFPRETMIGSMAYYISHAKNNKNFQPMNANFGLLPSLETRIKDKKERYEAQANRALDYLENFKKTL</sequence>
<keyword id="KW-0963">Cytoplasm</keyword>
<keyword id="KW-0274">FAD</keyword>
<keyword id="KW-0285">Flavoprotein</keyword>
<keyword id="KW-0489">Methyltransferase</keyword>
<keyword id="KW-0520">NAD</keyword>
<keyword id="KW-0521">NADP</keyword>
<keyword id="KW-0808">Transferase</keyword>
<keyword id="KW-0819">tRNA processing</keyword>
<organism>
    <name type="scientific">Staphylococcus aureus (strain USA300)</name>
    <dbReference type="NCBI Taxonomy" id="367830"/>
    <lineage>
        <taxon>Bacteria</taxon>
        <taxon>Bacillati</taxon>
        <taxon>Bacillota</taxon>
        <taxon>Bacilli</taxon>
        <taxon>Bacillales</taxon>
        <taxon>Staphylococcaceae</taxon>
        <taxon>Staphylococcus</taxon>
    </lineage>
</organism>
<dbReference type="EC" id="2.1.1.74" evidence="1"/>
<dbReference type="EMBL" id="CP000255">
    <property type="protein sequence ID" value="ABD22330.1"/>
    <property type="molecule type" value="Genomic_DNA"/>
</dbReference>
<dbReference type="RefSeq" id="WP_000195254.1">
    <property type="nucleotide sequence ID" value="NZ_CP027476.1"/>
</dbReference>
<dbReference type="SMR" id="Q2FHI7"/>
<dbReference type="KEGG" id="saa:SAUSA300_1144"/>
<dbReference type="HOGENOM" id="CLU_033057_1_0_9"/>
<dbReference type="OMA" id="MHRNTFL"/>
<dbReference type="Proteomes" id="UP000001939">
    <property type="component" value="Chromosome"/>
</dbReference>
<dbReference type="GO" id="GO:0005829">
    <property type="term" value="C:cytosol"/>
    <property type="evidence" value="ECO:0007669"/>
    <property type="project" value="TreeGrafter"/>
</dbReference>
<dbReference type="GO" id="GO:0050660">
    <property type="term" value="F:flavin adenine dinucleotide binding"/>
    <property type="evidence" value="ECO:0007669"/>
    <property type="project" value="UniProtKB-UniRule"/>
</dbReference>
<dbReference type="GO" id="GO:0047151">
    <property type="term" value="F:tRNA (uracil(54)-C5)-methyltransferase activity, 5,10-methylenetetrahydrofolate-dependent"/>
    <property type="evidence" value="ECO:0007669"/>
    <property type="project" value="UniProtKB-UniRule"/>
</dbReference>
<dbReference type="GO" id="GO:0030488">
    <property type="term" value="P:tRNA methylation"/>
    <property type="evidence" value="ECO:0007669"/>
    <property type="project" value="TreeGrafter"/>
</dbReference>
<dbReference type="GO" id="GO:0002098">
    <property type="term" value="P:tRNA wobble uridine modification"/>
    <property type="evidence" value="ECO:0007669"/>
    <property type="project" value="TreeGrafter"/>
</dbReference>
<dbReference type="FunFam" id="3.50.50.60:FF:000035">
    <property type="entry name" value="Methylenetetrahydrofolate--tRNA-(uracil-5-)-methyltransferase TrmFO"/>
    <property type="match status" value="1"/>
</dbReference>
<dbReference type="FunFam" id="3.50.50.60:FF:000040">
    <property type="entry name" value="Methylenetetrahydrofolate--tRNA-(uracil-5-)-methyltransferase TrmFO"/>
    <property type="match status" value="1"/>
</dbReference>
<dbReference type="Gene3D" id="3.50.50.60">
    <property type="entry name" value="FAD/NAD(P)-binding domain"/>
    <property type="match status" value="2"/>
</dbReference>
<dbReference type="HAMAP" id="MF_01037">
    <property type="entry name" value="TrmFO"/>
    <property type="match status" value="1"/>
</dbReference>
<dbReference type="InterPro" id="IPR036188">
    <property type="entry name" value="FAD/NAD-bd_sf"/>
</dbReference>
<dbReference type="InterPro" id="IPR002218">
    <property type="entry name" value="MnmG-rel"/>
</dbReference>
<dbReference type="InterPro" id="IPR020595">
    <property type="entry name" value="MnmG-rel_CS"/>
</dbReference>
<dbReference type="InterPro" id="IPR040131">
    <property type="entry name" value="MnmG_N"/>
</dbReference>
<dbReference type="InterPro" id="IPR004417">
    <property type="entry name" value="TrmFO"/>
</dbReference>
<dbReference type="NCBIfam" id="TIGR00137">
    <property type="entry name" value="gid_trmFO"/>
    <property type="match status" value="1"/>
</dbReference>
<dbReference type="NCBIfam" id="NF003739">
    <property type="entry name" value="PRK05335.1"/>
    <property type="match status" value="1"/>
</dbReference>
<dbReference type="PANTHER" id="PTHR11806">
    <property type="entry name" value="GLUCOSE INHIBITED DIVISION PROTEIN A"/>
    <property type="match status" value="1"/>
</dbReference>
<dbReference type="PANTHER" id="PTHR11806:SF2">
    <property type="entry name" value="METHYLENETETRAHYDROFOLATE--TRNA-(URACIL-5-)-METHYLTRANSFERASE TRMFO"/>
    <property type="match status" value="1"/>
</dbReference>
<dbReference type="Pfam" id="PF01134">
    <property type="entry name" value="GIDA"/>
    <property type="match status" value="1"/>
</dbReference>
<dbReference type="SUPFAM" id="SSF51905">
    <property type="entry name" value="FAD/NAD(P)-binding domain"/>
    <property type="match status" value="1"/>
</dbReference>
<dbReference type="PROSITE" id="PS01281">
    <property type="entry name" value="GIDA_2"/>
    <property type="match status" value="1"/>
</dbReference>
<gene>
    <name evidence="1" type="primary">trmFO</name>
    <name type="synonym">gid</name>
    <name type="ordered locus">SAUSA300_1144</name>
</gene>
<proteinExistence type="inferred from homology"/>